<name>SK1_PERAM</name>
<feature type="peptide" id="PRO_0000043893" description="Sulfakinin-1">
    <location>
        <begin position="1"/>
        <end position="11"/>
    </location>
</feature>
<feature type="modified residue" description="Sulfotyrosine" evidence="1 3">
    <location>
        <position position="6"/>
    </location>
</feature>
<feature type="modified residue" description="Phenylalanine amide" evidence="1 2 3">
    <location>
        <position position="11"/>
    </location>
</feature>
<protein>
    <recommendedName>
        <fullName>Sulfakinin-1</fullName>
        <shortName>PerAm-SK-1</shortName>
    </recommendedName>
    <alternativeName>
        <fullName>Perisulfakinin</fullName>
        <shortName>Pea-SK-I</shortName>
    </alternativeName>
</protein>
<evidence type="ECO:0000269" key="1">
    <source>
    </source>
</evidence>
<evidence type="ECO:0000269" key="2">
    <source>
    </source>
</evidence>
<evidence type="ECO:0000269" key="3">
    <source>
    </source>
</evidence>
<evidence type="ECO:0000305" key="4"/>
<organism>
    <name type="scientific">Periplaneta americana</name>
    <name type="common">American cockroach</name>
    <name type="synonym">Blatta americana</name>
    <dbReference type="NCBI Taxonomy" id="6978"/>
    <lineage>
        <taxon>Eukaryota</taxon>
        <taxon>Metazoa</taxon>
        <taxon>Ecdysozoa</taxon>
        <taxon>Arthropoda</taxon>
        <taxon>Hexapoda</taxon>
        <taxon>Insecta</taxon>
        <taxon>Pterygota</taxon>
        <taxon>Neoptera</taxon>
        <taxon>Polyneoptera</taxon>
        <taxon>Dictyoptera</taxon>
        <taxon>Blattodea</taxon>
        <taxon>Blattoidea</taxon>
        <taxon>Blattidae</taxon>
        <taxon>Blattinae</taxon>
        <taxon>Periplaneta</taxon>
    </lineage>
</organism>
<comment type="function">
    <text>Stimulates hindgut contractions.</text>
</comment>
<comment type="subcellular location">
    <subcellularLocation>
        <location>Secreted</location>
    </subcellularLocation>
</comment>
<comment type="similarity">
    <text evidence="4">Belongs to the gastrin/cholecystokinin family.</text>
</comment>
<comment type="caution">
    <text evidence="4">PubMed:10406966 reported, in addition to the presence of glutamate methyl ester, the partial formation of pyroglutamic acid by the N-terminal glutamic acid. These are most probably artifacts of isolation.</text>
</comment>
<dbReference type="PIR" id="A60656">
    <property type="entry name" value="A60656"/>
</dbReference>
<dbReference type="GO" id="GO:0005576">
    <property type="term" value="C:extracellular region"/>
    <property type="evidence" value="ECO:0007669"/>
    <property type="project" value="UniProtKB-SubCell"/>
</dbReference>
<dbReference type="GO" id="GO:0005179">
    <property type="term" value="F:hormone activity"/>
    <property type="evidence" value="ECO:0007669"/>
    <property type="project" value="UniProtKB-KW"/>
</dbReference>
<dbReference type="GO" id="GO:0007218">
    <property type="term" value="P:neuropeptide signaling pathway"/>
    <property type="evidence" value="ECO:0007669"/>
    <property type="project" value="UniProtKB-KW"/>
</dbReference>
<dbReference type="InterPro" id="IPR013152">
    <property type="entry name" value="Gastrin/cholecystokinin_CS"/>
</dbReference>
<dbReference type="InterPro" id="IPR013259">
    <property type="entry name" value="Sulfakinin"/>
</dbReference>
<dbReference type="Pfam" id="PF08257">
    <property type="entry name" value="Sulfakinin"/>
    <property type="match status" value="1"/>
</dbReference>
<dbReference type="PROSITE" id="PS00259">
    <property type="entry name" value="GASTRIN"/>
    <property type="match status" value="1"/>
</dbReference>
<proteinExistence type="evidence at protein level"/>
<reference key="1">
    <citation type="journal article" date="1989" name="Neuropeptides">
        <title>Isolation and structure of two gastrin/CCK-like neuropeptides from the American cockroach homologous to the leucosulfakinins.</title>
        <authorList>
            <person name="Veenstra J.A."/>
        </authorList>
    </citation>
    <scope>PROTEIN SEQUENCE</scope>
    <scope>AMIDATION AT PHE-11</scope>
    <scope>SULFATION AT TYR-6</scope>
    <source>
        <tissue>Corpora cardiaca</tissue>
    </source>
</reference>
<reference key="2">
    <citation type="journal article" date="1999" name="Eur. J. Biochem.">
        <title>Post-translational modifications of the insect sulfakinins: sulfation, pyroglutamate-formation and O-methylation of glutamic acid.</title>
        <authorList>
            <person name="Predel R."/>
            <person name="Brandt W."/>
            <person name="Kellner R."/>
            <person name="Rapus J."/>
            <person name="Nachman R.J."/>
            <person name="Gaede G."/>
        </authorList>
    </citation>
    <scope>PROTEIN SEQUENCE</scope>
    <scope>AMIDATION AT PHE-11</scope>
    <scope>SULFATION AT TYR-6</scope>
</reference>
<reference key="3">
    <citation type="journal article" date="2009" name="BMC Evol. Biol.">
        <title>A proteomic approach for studying insect phylogeny: CAPA peptides of ancient insect taxa (Dictyoptera, Blattoptera) as a test case.</title>
        <authorList>
            <person name="Roth S."/>
            <person name="Fromm B."/>
            <person name="Gaede G."/>
            <person name="Predel R."/>
        </authorList>
    </citation>
    <scope>PROTEIN SEQUENCE</scope>
    <scope>AMIDATION AT PHE-11</scope>
    <source>
        <tissue>Corpora cardiaca</tissue>
    </source>
</reference>
<keyword id="KW-0027">Amidation</keyword>
<keyword id="KW-0903">Direct protein sequencing</keyword>
<keyword id="KW-0372">Hormone</keyword>
<keyword id="KW-0527">Neuropeptide</keyword>
<keyword id="KW-0964">Secreted</keyword>
<keyword id="KW-0765">Sulfation</keyword>
<accession>P36885</accession>
<sequence length="11" mass="1445">EQFDDYGHMRF</sequence>